<proteinExistence type="evidence at transcript level"/>
<evidence type="ECO:0000269" key="1">
    <source>
    </source>
</evidence>
<evidence type="ECO:0000303" key="2">
    <source>
    </source>
</evidence>
<evidence type="ECO:0000305" key="3"/>
<evidence type="ECO:0000305" key="4">
    <source>
    </source>
</evidence>
<sequence>MREYQRLKGFTDNLELRRRNRATVEHYMRMKGAERLQRHSLFVEDGCAGNWTTESGEPLVFRGHESLRRLAEWLERCFPDWEWHNVRIFETEDPNHFWVECDGRGKALVPGYPQGYCENHYIHSFELENGRIKRNREFMNPMQKLRALGIAVPQIKRDGIPT</sequence>
<feature type="chain" id="PRO_0000287799" description="Phenazine biosynthesis protein PhzA2">
    <location>
        <begin position="1"/>
        <end position="162"/>
    </location>
</feature>
<feature type="sequence conflict" description="In Ref. 1; AAD45624." evidence="3" ref="1">
    <original>F</original>
    <variation>L</variation>
    <location>
        <position position="97"/>
    </location>
</feature>
<feature type="sequence conflict" description="In Ref. 1; AAD45624." evidence="3" ref="1">
    <original>M</original>
    <variation>T</variation>
    <location>
        <position position="139"/>
    </location>
</feature>
<name>PHZA2_PSEAE</name>
<keyword id="KW-0045">Antibiotic biosynthesis</keyword>
<keyword id="KW-1185">Reference proteome</keyword>
<keyword id="KW-0843">Virulence</keyword>
<accession>Q9I2J9</accession>
<accession>Q9S509</accession>
<organism>
    <name type="scientific">Pseudomonas aeruginosa (strain ATCC 15692 / DSM 22644 / CIP 104116 / JCM 14847 / LMG 12228 / 1C / PRS 101 / PAO1)</name>
    <dbReference type="NCBI Taxonomy" id="208964"/>
    <lineage>
        <taxon>Bacteria</taxon>
        <taxon>Pseudomonadati</taxon>
        <taxon>Pseudomonadota</taxon>
        <taxon>Gammaproteobacteria</taxon>
        <taxon>Pseudomonadales</taxon>
        <taxon>Pseudomonadaceae</taxon>
        <taxon>Pseudomonas</taxon>
    </lineage>
</organism>
<dbReference type="EMBL" id="AF092442">
    <property type="protein sequence ID" value="AAD45624.1"/>
    <property type="molecule type" value="Genomic_DNA"/>
</dbReference>
<dbReference type="EMBL" id="AE004091">
    <property type="protein sequence ID" value="AAG05288.1"/>
    <property type="molecule type" value="Genomic_DNA"/>
</dbReference>
<dbReference type="PIR" id="E83407">
    <property type="entry name" value="E83407"/>
</dbReference>
<dbReference type="RefSeq" id="NP_250590.1">
    <property type="nucleotide sequence ID" value="NC_002516.2"/>
</dbReference>
<dbReference type="SMR" id="Q9I2J9"/>
<dbReference type="STRING" id="208964.PA1899"/>
<dbReference type="PaxDb" id="208964-PA1899"/>
<dbReference type="DNASU" id="878477"/>
<dbReference type="GeneID" id="878477"/>
<dbReference type="KEGG" id="pae:PA1899"/>
<dbReference type="PATRIC" id="fig|208964.12.peg.1977"/>
<dbReference type="PseudoCAP" id="PA1899"/>
<dbReference type="HOGENOM" id="CLU_141345_0_0_6"/>
<dbReference type="InParanoid" id="Q9I2J9"/>
<dbReference type="OrthoDB" id="8479735at2"/>
<dbReference type="PhylomeDB" id="Q9I2J9"/>
<dbReference type="BioCyc" id="PAER208964:G1FZ6-1939-MONOMER"/>
<dbReference type="UniPathway" id="UPA00099"/>
<dbReference type="PHI-base" id="PHI:9813"/>
<dbReference type="Proteomes" id="UP000002438">
    <property type="component" value="Chromosome"/>
</dbReference>
<dbReference type="GO" id="GO:0002047">
    <property type="term" value="P:phenazine biosynthetic process"/>
    <property type="evidence" value="ECO:0000314"/>
    <property type="project" value="PseudoCAP"/>
</dbReference>
<dbReference type="FunFam" id="3.10.450.50:FF:000014">
    <property type="entry name" value="Phenazine biosynthesis protein PhzB 2"/>
    <property type="match status" value="1"/>
</dbReference>
<dbReference type="Gene3D" id="3.10.450.50">
    <property type="match status" value="1"/>
</dbReference>
<dbReference type="InterPro" id="IPR032710">
    <property type="entry name" value="NTF2-like_dom_sf"/>
</dbReference>
<dbReference type="InterPro" id="IPR004964">
    <property type="entry name" value="PhzA_PhzB"/>
</dbReference>
<dbReference type="Pfam" id="PF03284">
    <property type="entry name" value="PHZA_PHZB"/>
    <property type="match status" value="1"/>
</dbReference>
<dbReference type="SUPFAM" id="SSF54427">
    <property type="entry name" value="NTF2-like"/>
    <property type="match status" value="1"/>
</dbReference>
<protein>
    <recommendedName>
        <fullName evidence="2">Phenazine biosynthesis protein PhzA2</fullName>
    </recommendedName>
</protein>
<gene>
    <name evidence="2" type="primary">phzA2</name>
    <name type="ordered locus">PA1899</name>
</gene>
<reference key="1">
    <citation type="journal article" date="1999" name="Cell">
        <title>Molecular mechanisms of bacterial virulence elucidated using a Pseudomonas aeruginosa-Caenorhabditis elegans pathogenesis model.</title>
        <authorList>
            <person name="Mahajan-Miklos S."/>
            <person name="Tan M.-W."/>
            <person name="Rahme L.G."/>
            <person name="Ausubel F.M."/>
        </authorList>
    </citation>
    <scope>NUCLEOTIDE SEQUENCE [GENOMIC DNA]</scope>
    <source>
        <strain>UCBPP-PA14</strain>
    </source>
</reference>
<reference key="2">
    <citation type="journal article" date="2000" name="Nature">
        <title>Complete genome sequence of Pseudomonas aeruginosa PAO1, an opportunistic pathogen.</title>
        <authorList>
            <person name="Stover C.K."/>
            <person name="Pham X.-Q.T."/>
            <person name="Erwin A.L."/>
            <person name="Mizoguchi S.D."/>
            <person name="Warrener P."/>
            <person name="Hickey M.J."/>
            <person name="Brinkman F.S.L."/>
            <person name="Hufnagle W.O."/>
            <person name="Kowalik D.J."/>
            <person name="Lagrou M."/>
            <person name="Garber R.L."/>
            <person name="Goltry L."/>
            <person name="Tolentino E."/>
            <person name="Westbrock-Wadman S."/>
            <person name="Yuan Y."/>
            <person name="Brody L.L."/>
            <person name="Coulter S.N."/>
            <person name="Folger K.R."/>
            <person name="Kas A."/>
            <person name="Larbig K."/>
            <person name="Lim R.M."/>
            <person name="Smith K.A."/>
            <person name="Spencer D.H."/>
            <person name="Wong G.K.-S."/>
            <person name="Wu Z."/>
            <person name="Paulsen I.T."/>
            <person name="Reizer J."/>
            <person name="Saier M.H. Jr."/>
            <person name="Hancock R.E.W."/>
            <person name="Lory S."/>
            <person name="Olson M.V."/>
        </authorList>
    </citation>
    <scope>NUCLEOTIDE SEQUENCE [LARGE SCALE GENOMIC DNA]</scope>
    <source>
        <strain>ATCC 15692 / DSM 22644 / CIP 104116 / JCM 14847 / LMG 12228 / 1C / PRS 101 / PAO1</strain>
    </source>
</reference>
<reference key="3">
    <citation type="journal article" date="2001" name="J. Bacteriol.">
        <title>Functional analysis of genes for biosynthesis of pyocyanin and phenazine-1-carboxamide from Pseudomonas aeruginosa PAO1.</title>
        <authorList>
            <person name="Mavrodi D.V."/>
            <person name="Bonsall R.F."/>
            <person name="Delaney S.M."/>
            <person name="Soule M.J."/>
            <person name="Phillips G."/>
            <person name="Thomashow L.S."/>
        </authorList>
    </citation>
    <scope>FUNCTION</scope>
    <scope>PATHWAY</scope>
    <source>
        <strain>ATCC 15692 / DSM 22644 / CIP 104116 / JCM 14847 / LMG 12228 / 1C / PRS 101 / PAO1</strain>
    </source>
</reference>
<reference key="4">
    <citation type="journal article" date="2012" name="Proc. Natl. Acad. Sci. U.S.A.">
        <title>Redundant phenazine operons in Pseudomonas aeruginosa exhibit environment-dependent expression and differential roles in pathogenicity.</title>
        <authorList>
            <person name="Recinos D.A."/>
            <person name="Sekedat M.D."/>
            <person name="Hernandez A."/>
            <person name="Cohen T.S."/>
            <person name="Sakhtah H."/>
            <person name="Prince A.S."/>
            <person name="Price-Whelan A."/>
            <person name="Dietrich L.E."/>
        </authorList>
    </citation>
    <scope>FUNCTION</scope>
    <scope>INDUCTION</scope>
</reference>
<comment type="function">
    <text evidence="1 4">Involved in the biosynthesis of the antibiotic phenazine, a nitrogen-containing heterocyclic molecule having important roles in virulence, competition and biological control. PhzA2 (operon phzA2B2C2E2F2G2) has a role in the biosynthesis of the phenazine during both planktonic growth and biofilm development, and in host infection during biofilm development.</text>
</comment>
<comment type="pathway">
    <text evidence="4">Antibiotic biosynthesis; phenazine biosynthesis.</text>
</comment>
<comment type="induction">
    <text evidence="1">In liquid cultures (aerobic), phz2 operon is induced by quinolone signal via 2-heptyl-3-hydroxy-4-quinolone (PQS). In biofilm (microaerobic), phz2 operon is induced by quinolone signal via 4-hydroxy-2-heptylquinoline (HHQ), a precursor of PQS.</text>
</comment>
<comment type="similarity">
    <text evidence="3">Belongs to the PhzA/PhzB family.</text>
</comment>